<sequence>MLDAFDRYPLTFGPTPIEKLERLTDHLGGKVQLYAKREDCNSGLAFGGNKLRKLEYIIPDAIASGADTLVSIGGVQSNHTRMVAAVAAKIGFKCRLVQEAWVPHEDAVYDRVGNIMLSRIMGADVRLVDDGFDIGIRRSWEEAIEEVKAAGGKPYAIPAGASVHKYGGLGYVGFAEEVRAQEAALGFAFDYIVVCTVTGSSHAGMAVGFAKDGRADHVIGIDASFTPDQTRAQVLEIAQRTADLVKLGREMRPEDIVLVEDYAYPVYGVPSEETKDAIRLVGRLEGMITDPVYEGKSMQGMIDLVKKGYFPEGSKVLYAHLGGAPALNGYGYAFRNG</sequence>
<reference key="1">
    <citation type="journal article" date="2009" name="J. Bacteriol.">
        <title>Genome sequences of three Agrobacterium biovars help elucidate the evolution of multichromosome genomes in bacteria.</title>
        <authorList>
            <person name="Slater S.C."/>
            <person name="Goldman B.S."/>
            <person name="Goodner B."/>
            <person name="Setubal J.C."/>
            <person name="Farrand S.K."/>
            <person name="Nester E.W."/>
            <person name="Burr T.J."/>
            <person name="Banta L."/>
            <person name="Dickerman A.W."/>
            <person name="Paulsen I."/>
            <person name="Otten L."/>
            <person name="Suen G."/>
            <person name="Welch R."/>
            <person name="Almeida N.F."/>
            <person name="Arnold F."/>
            <person name="Burton O.T."/>
            <person name="Du Z."/>
            <person name="Ewing A."/>
            <person name="Godsy E."/>
            <person name="Heisel S."/>
            <person name="Houmiel K.L."/>
            <person name="Jhaveri J."/>
            <person name="Lu J."/>
            <person name="Miller N.M."/>
            <person name="Norton S."/>
            <person name="Chen Q."/>
            <person name="Phoolcharoen W."/>
            <person name="Ohlin V."/>
            <person name="Ondrusek D."/>
            <person name="Pride N."/>
            <person name="Stricklin S.L."/>
            <person name="Sun J."/>
            <person name="Wheeler C."/>
            <person name="Wilson L."/>
            <person name="Zhu H."/>
            <person name="Wood D.W."/>
        </authorList>
    </citation>
    <scope>NUCLEOTIDE SEQUENCE [LARGE SCALE GENOMIC DNA]</scope>
    <source>
        <strain>ATCC BAA-846 / DSM 112012 / S4</strain>
    </source>
</reference>
<proteinExistence type="inferred from homology"/>
<feature type="chain" id="PRO_1000148575" description="1-aminocyclopropane-1-carboxylate deaminase">
    <location>
        <begin position="1"/>
        <end position="337"/>
    </location>
</feature>
<feature type="active site" description="Nucleophile" evidence="1">
    <location>
        <position position="77"/>
    </location>
</feature>
<feature type="modified residue" description="N6-(pyridoxal phosphate)lysine" evidence="1">
    <location>
        <position position="50"/>
    </location>
</feature>
<comment type="function">
    <text evidence="1">Catalyzes a cyclopropane ring-opening reaction, the irreversible conversion of 1-aminocyclopropane-1-carboxylate (ACC) to ammonia and alpha-ketobutyrate. Allows growth on ACC as a nitrogen source.</text>
</comment>
<comment type="catalytic activity">
    <reaction evidence="1">
        <text>1-aminocyclopropane-1-carboxylate + H2O = 2-oxobutanoate + NH4(+)</text>
        <dbReference type="Rhea" id="RHEA:16933"/>
        <dbReference type="ChEBI" id="CHEBI:15377"/>
        <dbReference type="ChEBI" id="CHEBI:16763"/>
        <dbReference type="ChEBI" id="CHEBI:28938"/>
        <dbReference type="ChEBI" id="CHEBI:58360"/>
        <dbReference type="EC" id="3.5.99.7"/>
    </reaction>
</comment>
<comment type="cofactor">
    <cofactor evidence="1">
        <name>pyridoxal 5'-phosphate</name>
        <dbReference type="ChEBI" id="CHEBI:597326"/>
    </cofactor>
</comment>
<comment type="subunit">
    <text evidence="1">Homotrimer.</text>
</comment>
<comment type="similarity">
    <text evidence="1">Belongs to the ACC deaminase/D-cysteine desulfhydrase family.</text>
</comment>
<accession>B9K206</accession>
<organism>
    <name type="scientific">Allorhizobium ampelinum (strain ATCC BAA-846 / DSM 112012 / S4)</name>
    <name type="common">Agrobacterium vitis (strain S4)</name>
    <dbReference type="NCBI Taxonomy" id="311402"/>
    <lineage>
        <taxon>Bacteria</taxon>
        <taxon>Pseudomonadati</taxon>
        <taxon>Pseudomonadota</taxon>
        <taxon>Alphaproteobacteria</taxon>
        <taxon>Hyphomicrobiales</taxon>
        <taxon>Rhizobiaceae</taxon>
        <taxon>Rhizobium/Agrobacterium group</taxon>
        <taxon>Allorhizobium</taxon>
        <taxon>Allorhizobium ampelinum</taxon>
    </lineage>
</organism>
<evidence type="ECO:0000255" key="1">
    <source>
        <dbReference type="HAMAP-Rule" id="MF_00807"/>
    </source>
</evidence>
<name>1A1D_ALLAM</name>
<gene>
    <name evidence="1" type="primary">acdS</name>
    <name type="ordered locus">Avi_5856</name>
</gene>
<protein>
    <recommendedName>
        <fullName evidence="1">1-aminocyclopropane-1-carboxylate deaminase</fullName>
        <shortName evidence="1">ACC deaminase</shortName>
        <shortName evidence="1">ACCD</shortName>
        <ecNumber evidence="1">3.5.99.7</ecNumber>
    </recommendedName>
</protein>
<keyword id="KW-0378">Hydrolase</keyword>
<keyword id="KW-0663">Pyridoxal phosphate</keyword>
<keyword id="KW-1185">Reference proteome</keyword>
<dbReference type="EC" id="3.5.99.7" evidence="1"/>
<dbReference type="EMBL" id="CP000634">
    <property type="protein sequence ID" value="ACM38904.1"/>
    <property type="molecule type" value="Genomic_DNA"/>
</dbReference>
<dbReference type="RefSeq" id="WP_012654146.1">
    <property type="nucleotide sequence ID" value="NC_011988.1"/>
</dbReference>
<dbReference type="SMR" id="B9K206"/>
<dbReference type="STRING" id="311402.Avi_5856"/>
<dbReference type="KEGG" id="avi:Avi_5856"/>
<dbReference type="eggNOG" id="COG2515">
    <property type="taxonomic scope" value="Bacteria"/>
</dbReference>
<dbReference type="HOGENOM" id="CLU_048897_2_1_5"/>
<dbReference type="Proteomes" id="UP000001596">
    <property type="component" value="Chromosome 2"/>
</dbReference>
<dbReference type="GO" id="GO:0008660">
    <property type="term" value="F:1-aminocyclopropane-1-carboxylate deaminase activity"/>
    <property type="evidence" value="ECO:0007669"/>
    <property type="project" value="UniProtKB-UniRule"/>
</dbReference>
<dbReference type="GO" id="GO:0019148">
    <property type="term" value="F:D-cysteine desulfhydrase activity"/>
    <property type="evidence" value="ECO:0007669"/>
    <property type="project" value="TreeGrafter"/>
</dbReference>
<dbReference type="GO" id="GO:0030170">
    <property type="term" value="F:pyridoxal phosphate binding"/>
    <property type="evidence" value="ECO:0007669"/>
    <property type="project" value="InterPro"/>
</dbReference>
<dbReference type="GO" id="GO:0018871">
    <property type="term" value="P:1-aminocyclopropane-1-carboxylate metabolic process"/>
    <property type="evidence" value="ECO:0007669"/>
    <property type="project" value="UniProtKB-UniRule"/>
</dbReference>
<dbReference type="GO" id="GO:0009310">
    <property type="term" value="P:amine catabolic process"/>
    <property type="evidence" value="ECO:0007669"/>
    <property type="project" value="InterPro"/>
</dbReference>
<dbReference type="CDD" id="cd06449">
    <property type="entry name" value="ACCD"/>
    <property type="match status" value="1"/>
</dbReference>
<dbReference type="FunFam" id="3.40.50.1100:FF:000048">
    <property type="entry name" value="1-aminocyclopropane-1-carboxylate deaminase"/>
    <property type="match status" value="1"/>
</dbReference>
<dbReference type="Gene3D" id="3.40.50.1100">
    <property type="match status" value="2"/>
</dbReference>
<dbReference type="HAMAP" id="MF_00807">
    <property type="entry name" value="ACC_deaminase"/>
    <property type="match status" value="1"/>
</dbReference>
<dbReference type="InterPro" id="IPR027278">
    <property type="entry name" value="ACCD_DCysDesulf"/>
</dbReference>
<dbReference type="InterPro" id="IPR005965">
    <property type="entry name" value="ACP_carboxylate_deaminase"/>
</dbReference>
<dbReference type="InterPro" id="IPR020601">
    <property type="entry name" value="ACP_carboxylate_deaminase_bac"/>
</dbReference>
<dbReference type="InterPro" id="IPR001926">
    <property type="entry name" value="TrpB-like_PALP"/>
</dbReference>
<dbReference type="InterPro" id="IPR036052">
    <property type="entry name" value="TrpB-like_PALP_sf"/>
</dbReference>
<dbReference type="NCBIfam" id="TIGR01274">
    <property type="entry name" value="ACC_deam"/>
    <property type="match status" value="1"/>
</dbReference>
<dbReference type="PANTHER" id="PTHR43780">
    <property type="entry name" value="1-AMINOCYCLOPROPANE-1-CARBOXYLATE DEAMINASE-RELATED"/>
    <property type="match status" value="1"/>
</dbReference>
<dbReference type="PANTHER" id="PTHR43780:SF2">
    <property type="entry name" value="1-AMINOCYCLOPROPANE-1-CARBOXYLATE DEAMINASE-RELATED"/>
    <property type="match status" value="1"/>
</dbReference>
<dbReference type="Pfam" id="PF00291">
    <property type="entry name" value="PALP"/>
    <property type="match status" value="1"/>
</dbReference>
<dbReference type="PIRSF" id="PIRSF006278">
    <property type="entry name" value="ACCD_DCysDesulf"/>
    <property type="match status" value="1"/>
</dbReference>
<dbReference type="SUPFAM" id="SSF53686">
    <property type="entry name" value="Tryptophan synthase beta subunit-like PLP-dependent enzymes"/>
    <property type="match status" value="1"/>
</dbReference>